<feature type="chain" id="PRO_0000238381" description="ATP synthase subunit alpha">
    <location>
        <begin position="1"/>
        <end position="505"/>
    </location>
</feature>
<feature type="binding site" evidence="2">
    <location>
        <begin position="170"/>
        <end position="177"/>
    </location>
    <ligand>
        <name>ATP</name>
        <dbReference type="ChEBI" id="CHEBI:30616"/>
    </ligand>
</feature>
<feature type="site" description="Required for activity" evidence="2">
    <location>
        <position position="363"/>
    </location>
</feature>
<comment type="function">
    <text evidence="2">Produces ATP from ADP in the presence of a proton gradient across the membrane. The alpha chain is a regulatory subunit.</text>
</comment>
<comment type="catalytic activity">
    <reaction evidence="2">
        <text>ATP + H2O + 4 H(+)(in) = ADP + phosphate + 5 H(+)(out)</text>
        <dbReference type="Rhea" id="RHEA:57720"/>
        <dbReference type="ChEBI" id="CHEBI:15377"/>
        <dbReference type="ChEBI" id="CHEBI:15378"/>
        <dbReference type="ChEBI" id="CHEBI:30616"/>
        <dbReference type="ChEBI" id="CHEBI:43474"/>
        <dbReference type="ChEBI" id="CHEBI:456216"/>
        <dbReference type="EC" id="7.1.2.2"/>
    </reaction>
</comment>
<comment type="subunit">
    <text evidence="1">F-type ATPases have 2 components, CF(1) - the catalytic core - and CF(0) - the membrane proton channel. CF(1) has five subunits: alpha(3), beta(3), gamma(1), delta(1), epsilon(1). CF(0) has four main subunits: a(1), b(1), b'(1) and c(9-12) (By similarity).</text>
</comment>
<comment type="subcellular location">
    <subcellularLocation>
        <location evidence="2">Cellular thylakoid membrane</location>
        <topology evidence="2">Peripheral membrane protein</topology>
    </subcellularLocation>
</comment>
<comment type="similarity">
    <text evidence="2">Belongs to the ATPase alpha/beta chains family.</text>
</comment>
<proteinExistence type="inferred from homology"/>
<reference key="1">
    <citation type="submission" date="2005-08" db="EMBL/GenBank/DDBJ databases">
        <title>Complete sequence of chromosome 1 of Synechococcus elongatus PCC 7942.</title>
        <authorList>
            <consortium name="US DOE Joint Genome Institute"/>
            <person name="Copeland A."/>
            <person name="Lucas S."/>
            <person name="Lapidus A."/>
            <person name="Barry K."/>
            <person name="Detter J.C."/>
            <person name="Glavina T."/>
            <person name="Hammon N."/>
            <person name="Israni S."/>
            <person name="Pitluck S."/>
            <person name="Schmutz J."/>
            <person name="Larimer F."/>
            <person name="Land M."/>
            <person name="Kyrpides N."/>
            <person name="Lykidis A."/>
            <person name="Golden S."/>
            <person name="Richardson P."/>
        </authorList>
    </citation>
    <scope>NUCLEOTIDE SEQUENCE [LARGE SCALE GENOMIC DNA]</scope>
    <source>
        <strain>ATCC 33912 / PCC 7942 / FACHB-805</strain>
    </source>
</reference>
<protein>
    <recommendedName>
        <fullName evidence="2">ATP synthase subunit alpha</fullName>
        <ecNumber evidence="2">7.1.2.2</ecNumber>
    </recommendedName>
    <alternativeName>
        <fullName evidence="2">ATP synthase F1 sector subunit alpha</fullName>
    </alternativeName>
    <alternativeName>
        <fullName evidence="2">F-ATPase subunit alpha</fullName>
    </alternativeName>
</protein>
<accession>Q31RF1</accession>
<dbReference type="EC" id="7.1.2.2" evidence="2"/>
<dbReference type="EMBL" id="CP000100">
    <property type="protein sequence ID" value="ABB56368.1"/>
    <property type="molecule type" value="Genomic_DNA"/>
</dbReference>
<dbReference type="RefSeq" id="WP_011377539.1">
    <property type="nucleotide sequence ID" value="NC_007604.1"/>
</dbReference>
<dbReference type="SMR" id="Q31RF1"/>
<dbReference type="STRING" id="1140.Synpcc7942_0336"/>
<dbReference type="PaxDb" id="1140-Synpcc7942_0336"/>
<dbReference type="KEGG" id="syf:Synpcc7942_0336"/>
<dbReference type="eggNOG" id="COG0056">
    <property type="taxonomic scope" value="Bacteria"/>
</dbReference>
<dbReference type="HOGENOM" id="CLU_010091_2_1_3"/>
<dbReference type="OrthoDB" id="9803053at2"/>
<dbReference type="BioCyc" id="MetaCyc:SYNPCC7942_0336-MONOMER"/>
<dbReference type="BioCyc" id="SYNEL:SYNPCC7942_0336-MONOMER"/>
<dbReference type="Proteomes" id="UP000889800">
    <property type="component" value="Chromosome"/>
</dbReference>
<dbReference type="GO" id="GO:0031676">
    <property type="term" value="C:plasma membrane-derived thylakoid membrane"/>
    <property type="evidence" value="ECO:0007669"/>
    <property type="project" value="UniProtKB-SubCell"/>
</dbReference>
<dbReference type="GO" id="GO:0045259">
    <property type="term" value="C:proton-transporting ATP synthase complex"/>
    <property type="evidence" value="ECO:0007669"/>
    <property type="project" value="UniProtKB-KW"/>
</dbReference>
<dbReference type="GO" id="GO:0043531">
    <property type="term" value="F:ADP binding"/>
    <property type="evidence" value="ECO:0007669"/>
    <property type="project" value="TreeGrafter"/>
</dbReference>
<dbReference type="GO" id="GO:0005524">
    <property type="term" value="F:ATP binding"/>
    <property type="evidence" value="ECO:0007669"/>
    <property type="project" value="UniProtKB-UniRule"/>
</dbReference>
<dbReference type="GO" id="GO:0046933">
    <property type="term" value="F:proton-transporting ATP synthase activity, rotational mechanism"/>
    <property type="evidence" value="ECO:0007669"/>
    <property type="project" value="UniProtKB-UniRule"/>
</dbReference>
<dbReference type="CDD" id="cd18113">
    <property type="entry name" value="ATP-synt_F1_alpha_C"/>
    <property type="match status" value="1"/>
</dbReference>
<dbReference type="CDD" id="cd18116">
    <property type="entry name" value="ATP-synt_F1_alpha_N"/>
    <property type="match status" value="1"/>
</dbReference>
<dbReference type="CDD" id="cd01132">
    <property type="entry name" value="F1-ATPase_alpha_CD"/>
    <property type="match status" value="1"/>
</dbReference>
<dbReference type="FunFam" id="1.20.150.20:FF:000001">
    <property type="entry name" value="ATP synthase subunit alpha"/>
    <property type="match status" value="1"/>
</dbReference>
<dbReference type="FunFam" id="2.40.30.20:FF:000001">
    <property type="entry name" value="ATP synthase subunit alpha"/>
    <property type="match status" value="1"/>
</dbReference>
<dbReference type="FunFam" id="3.40.50.300:FF:000002">
    <property type="entry name" value="ATP synthase subunit alpha"/>
    <property type="match status" value="1"/>
</dbReference>
<dbReference type="Gene3D" id="2.40.30.20">
    <property type="match status" value="1"/>
</dbReference>
<dbReference type="Gene3D" id="1.20.150.20">
    <property type="entry name" value="ATP synthase alpha/beta chain, C-terminal domain"/>
    <property type="match status" value="1"/>
</dbReference>
<dbReference type="Gene3D" id="3.40.50.300">
    <property type="entry name" value="P-loop containing nucleotide triphosphate hydrolases"/>
    <property type="match status" value="1"/>
</dbReference>
<dbReference type="HAMAP" id="MF_01346">
    <property type="entry name" value="ATP_synth_alpha_bact"/>
    <property type="match status" value="1"/>
</dbReference>
<dbReference type="InterPro" id="IPR023366">
    <property type="entry name" value="ATP_synth_asu-like_sf"/>
</dbReference>
<dbReference type="InterPro" id="IPR000793">
    <property type="entry name" value="ATP_synth_asu_C"/>
</dbReference>
<dbReference type="InterPro" id="IPR038376">
    <property type="entry name" value="ATP_synth_asu_C_sf"/>
</dbReference>
<dbReference type="InterPro" id="IPR033732">
    <property type="entry name" value="ATP_synth_F1_a_nt-bd_dom"/>
</dbReference>
<dbReference type="InterPro" id="IPR005294">
    <property type="entry name" value="ATP_synth_F1_asu"/>
</dbReference>
<dbReference type="InterPro" id="IPR020003">
    <property type="entry name" value="ATPase_a/bsu_AS"/>
</dbReference>
<dbReference type="InterPro" id="IPR004100">
    <property type="entry name" value="ATPase_F1/V1/A1_a/bsu_N"/>
</dbReference>
<dbReference type="InterPro" id="IPR036121">
    <property type="entry name" value="ATPase_F1/V1/A1_a/bsu_N_sf"/>
</dbReference>
<dbReference type="InterPro" id="IPR000194">
    <property type="entry name" value="ATPase_F1/V1/A1_a/bsu_nucl-bd"/>
</dbReference>
<dbReference type="InterPro" id="IPR027417">
    <property type="entry name" value="P-loop_NTPase"/>
</dbReference>
<dbReference type="NCBIfam" id="TIGR00962">
    <property type="entry name" value="atpA"/>
    <property type="match status" value="1"/>
</dbReference>
<dbReference type="NCBIfam" id="NF009884">
    <property type="entry name" value="PRK13343.1"/>
    <property type="match status" value="1"/>
</dbReference>
<dbReference type="PANTHER" id="PTHR48082">
    <property type="entry name" value="ATP SYNTHASE SUBUNIT ALPHA, MITOCHONDRIAL"/>
    <property type="match status" value="1"/>
</dbReference>
<dbReference type="PANTHER" id="PTHR48082:SF2">
    <property type="entry name" value="ATP SYNTHASE SUBUNIT ALPHA, MITOCHONDRIAL"/>
    <property type="match status" value="1"/>
</dbReference>
<dbReference type="Pfam" id="PF00006">
    <property type="entry name" value="ATP-synt_ab"/>
    <property type="match status" value="1"/>
</dbReference>
<dbReference type="Pfam" id="PF00306">
    <property type="entry name" value="ATP-synt_ab_C"/>
    <property type="match status" value="1"/>
</dbReference>
<dbReference type="Pfam" id="PF02874">
    <property type="entry name" value="ATP-synt_ab_N"/>
    <property type="match status" value="1"/>
</dbReference>
<dbReference type="PIRSF" id="PIRSF039088">
    <property type="entry name" value="F_ATPase_subunit_alpha"/>
    <property type="match status" value="1"/>
</dbReference>
<dbReference type="SUPFAM" id="SSF47917">
    <property type="entry name" value="C-terminal domain of alpha and beta subunits of F1 ATP synthase"/>
    <property type="match status" value="1"/>
</dbReference>
<dbReference type="SUPFAM" id="SSF50615">
    <property type="entry name" value="N-terminal domain of alpha and beta subunits of F1 ATP synthase"/>
    <property type="match status" value="1"/>
</dbReference>
<dbReference type="SUPFAM" id="SSF52540">
    <property type="entry name" value="P-loop containing nucleoside triphosphate hydrolases"/>
    <property type="match status" value="1"/>
</dbReference>
<dbReference type="PROSITE" id="PS00152">
    <property type="entry name" value="ATPASE_ALPHA_BETA"/>
    <property type="match status" value="1"/>
</dbReference>
<keyword id="KW-0066">ATP synthesis</keyword>
<keyword id="KW-0067">ATP-binding</keyword>
<keyword id="KW-0139">CF(1)</keyword>
<keyword id="KW-0375">Hydrogen ion transport</keyword>
<keyword id="KW-0406">Ion transport</keyword>
<keyword id="KW-0472">Membrane</keyword>
<keyword id="KW-0547">Nucleotide-binding</keyword>
<keyword id="KW-1185">Reference proteome</keyword>
<keyword id="KW-0793">Thylakoid</keyword>
<keyword id="KW-1278">Translocase</keyword>
<keyword id="KW-0813">Transport</keyword>
<gene>
    <name evidence="2" type="primary">atpA</name>
    <name type="ordered locus">Synpcc7942_0336</name>
</gene>
<organism>
    <name type="scientific">Synechococcus elongatus (strain ATCC 33912 / PCC 7942 / FACHB-805)</name>
    <name type="common">Anacystis nidulans R2</name>
    <dbReference type="NCBI Taxonomy" id="1140"/>
    <lineage>
        <taxon>Bacteria</taxon>
        <taxon>Bacillati</taxon>
        <taxon>Cyanobacteriota</taxon>
        <taxon>Cyanophyceae</taxon>
        <taxon>Synechococcales</taxon>
        <taxon>Synechococcaceae</taxon>
        <taxon>Synechococcus</taxon>
    </lineage>
</organism>
<evidence type="ECO:0000250" key="1"/>
<evidence type="ECO:0000255" key="2">
    <source>
        <dbReference type="HAMAP-Rule" id="MF_01346"/>
    </source>
</evidence>
<name>ATPA_SYNE7</name>
<sequence length="505" mass="54013">MVSIRPDEISSIIRQQIEQYSQDVKVENVGTVLQVGDGIARIYGLQQVMSGELVEFEDGTTGIALNLEEDNVGAVLMGEGRNIQEGSTVKATGKIAQIPVGDALVGRVVSPLGAPLDGKGEIAATENRLIESPAPGIIARRSVHEPMQTGITAIDAMIPIGRGQRELIIGDRQTGKTAIAIDTILNQKGEDVICVYVAIGQKASSVANIIEVLRERGALDYTVVVAANASEPATLQYLAPYAGAAIAEYFMCKGKATLVIYDDLTKQAQAYRQMSLLLRRPPGREAYPGDVFYLHSRLLERAAKLSDALGGGSMTALPVIETQAGDVSAYIPTNVISITDGQIFLSSDLFNSGLRPAINVGISVSRVGSAAQTKAIKKIAGTLKLELAQFDELAAFAQFASDLDKATQNQLARGQRLRELLKQPQFSPLILAEQVAVVYAGVKGLIDEIPVNQVTAFVSELRSYLKTSKPEFIEKVQSSKQLDDAAEALLKEAIAEVKKNILAAV</sequence>